<feature type="chain" id="PRO_0000433158" description="Pumilio homolog 1">
    <location>
        <begin position="1"/>
        <end position="1190"/>
    </location>
</feature>
<feature type="domain" description="PUM-HD" evidence="4">
    <location>
        <begin position="830"/>
        <end position="1172"/>
    </location>
</feature>
<feature type="repeat" description="Pumilio 1" evidence="3">
    <location>
        <begin position="850"/>
        <end position="885"/>
    </location>
</feature>
<feature type="repeat" description="Pumilio 2" evidence="3">
    <location>
        <begin position="886"/>
        <end position="921"/>
    </location>
</feature>
<feature type="repeat" description="Pumilio 3" evidence="3">
    <location>
        <begin position="922"/>
        <end position="959"/>
    </location>
</feature>
<feature type="repeat" description="Pumilio 4" evidence="3">
    <location>
        <begin position="960"/>
        <end position="995"/>
    </location>
</feature>
<feature type="repeat" description="Pumilio 5" evidence="3">
    <location>
        <begin position="996"/>
        <end position="1031"/>
    </location>
</feature>
<feature type="repeat" description="Pumilio 6" evidence="3">
    <location>
        <begin position="1032"/>
        <end position="1067"/>
    </location>
</feature>
<feature type="repeat" description="Pumilio 7" evidence="3">
    <location>
        <begin position="1068"/>
        <end position="1103"/>
    </location>
</feature>
<feature type="repeat" description="Pumilio 8" evidence="3">
    <location>
        <begin position="1107"/>
        <end position="1146"/>
    </location>
</feature>
<feature type="region of interest" description="Disordered" evidence="5">
    <location>
        <begin position="38"/>
        <end position="74"/>
    </location>
</feature>
<feature type="region of interest" description="Disordered" evidence="5">
    <location>
        <begin position="491"/>
        <end position="531"/>
    </location>
</feature>
<feature type="region of interest" description="Disordered" evidence="5">
    <location>
        <begin position="611"/>
        <end position="675"/>
    </location>
</feature>
<feature type="region of interest" description="Disordered" evidence="5">
    <location>
        <begin position="744"/>
        <end position="777"/>
    </location>
</feature>
<feature type="region of interest" description="Adenine-nucleotide binding in RNA target" evidence="1">
    <location>
        <begin position="865"/>
        <end position="869"/>
    </location>
</feature>
<feature type="region of interest" description="Uracil-nucleotide binding in RNA target" evidence="1">
    <location>
        <begin position="901"/>
        <end position="905"/>
    </location>
</feature>
<feature type="region of interest" description="Adenine-nucleotide binding in RNA target" evidence="1">
    <location>
        <begin position="937"/>
        <end position="941"/>
    </location>
</feature>
<feature type="region of interest" description="Non-specific-nucleotide binding in RNA target" evidence="1">
    <location>
        <begin position="975"/>
        <end position="979"/>
    </location>
</feature>
<feature type="region of interest" description="Adenine-nucleotide binding in RNA target" evidence="1">
    <location>
        <begin position="1011"/>
        <end position="1015"/>
    </location>
</feature>
<feature type="region of interest" description="Uracil-nucleotide binding in RNA target" evidence="1">
    <location>
        <begin position="1047"/>
        <end position="1051"/>
    </location>
</feature>
<feature type="region of interest" description="Guanine-nucleotide binding in RNA target" evidence="1">
    <location>
        <begin position="1083"/>
        <end position="1087"/>
    </location>
</feature>
<feature type="region of interest" description="Uracil-nucleotide binding in RNA target" evidence="1">
    <location>
        <begin position="1126"/>
        <end position="1130"/>
    </location>
</feature>
<feature type="compositionally biased region" description="Low complexity" evidence="5">
    <location>
        <begin position="491"/>
        <end position="508"/>
    </location>
</feature>
<feature type="compositionally biased region" description="Low complexity" evidence="5">
    <location>
        <begin position="518"/>
        <end position="531"/>
    </location>
</feature>
<feature type="compositionally biased region" description="Low complexity" evidence="5">
    <location>
        <begin position="628"/>
        <end position="675"/>
    </location>
</feature>
<feature type="compositionally biased region" description="Low complexity" evidence="5">
    <location>
        <begin position="765"/>
        <end position="777"/>
    </location>
</feature>
<feature type="splice variant" id="VSP_057677" description="In isoform 2.">
    <location>
        <begin position="419"/>
        <end position="423"/>
    </location>
</feature>
<feature type="sequence conflict" description="In Ref. 1; BAC57980." evidence="9" ref="1">
    <original>N</original>
    <variation>I</variation>
    <location>
        <position position="641"/>
    </location>
</feature>
<organism>
    <name type="scientific">Xenopus laevis</name>
    <name type="common">African clawed frog</name>
    <dbReference type="NCBI Taxonomy" id="8355"/>
    <lineage>
        <taxon>Eukaryota</taxon>
        <taxon>Metazoa</taxon>
        <taxon>Chordata</taxon>
        <taxon>Craniata</taxon>
        <taxon>Vertebrata</taxon>
        <taxon>Euteleostomi</taxon>
        <taxon>Amphibia</taxon>
        <taxon>Batrachia</taxon>
        <taxon>Anura</taxon>
        <taxon>Pipoidea</taxon>
        <taxon>Pipidae</taxon>
        <taxon>Xenopodinae</taxon>
        <taxon>Xenopus</taxon>
        <taxon>Xenopus</taxon>
    </lineage>
</organism>
<evidence type="ECO:0000250" key="1">
    <source>
        <dbReference type="UniProtKB" id="Q14671"/>
    </source>
</evidence>
<evidence type="ECO:0000250" key="2">
    <source>
        <dbReference type="UniProtKB" id="Q80U78"/>
    </source>
</evidence>
<evidence type="ECO:0000255" key="3">
    <source>
        <dbReference type="PROSITE-ProRule" id="PRU00317"/>
    </source>
</evidence>
<evidence type="ECO:0000255" key="4">
    <source>
        <dbReference type="PROSITE-ProRule" id="PRU00318"/>
    </source>
</evidence>
<evidence type="ECO:0000256" key="5">
    <source>
        <dbReference type="SAM" id="MobiDB-lite"/>
    </source>
</evidence>
<evidence type="ECO:0000269" key="6">
    <source>
    </source>
</evidence>
<evidence type="ECO:0000269" key="7">
    <source>
    </source>
</evidence>
<evidence type="ECO:0000303" key="8">
    <source>
    </source>
</evidence>
<evidence type="ECO:0000305" key="9"/>
<evidence type="ECO:0000312" key="10">
    <source>
        <dbReference type="EMBL" id="AAH80379.1"/>
    </source>
</evidence>
<evidence type="ECO:0000312" key="11">
    <source>
        <dbReference type="EMBL" id="BAC57980.1"/>
    </source>
</evidence>
<evidence type="ECO:0000312" key="12">
    <source>
        <dbReference type="Xenbase" id="XB-GENE-957405"/>
    </source>
</evidence>
<comment type="function">
    <text evidence="1 2 6 7">Sequence-specific RNA-binding protein that acts as a post-transcriptional repressor by binding the 3'-UTR of mRNA targets. Binds to an RNA consensus sequence, the Pumilio Response Element (PRE), 5'-UGUANAUA-3', that is related to the Nanos Response Element (NRE). Mediates post-transcriptional repression of transcripts via different mechanisms: acts via direct recruitment of deadenylase complexes leading to translational inhibition and mRNA degradation (PubMed:12963108, PubMed:21098481). Also mediates deadenylation-independent repression by promoting accessibility of miRNAs (By similarity). Acts as a post-transcriptional repressor of ccnb1 mRNA during oocyte maturation (PubMed:12963108).</text>
</comment>
<comment type="subunit">
    <text evidence="6 7">Interacts with cpeb1-a; interacts with unphosphorylated cpeb1-a but not phosphorylated (PubMed:12963108). Component of a complex with papd4, sympk, tacc3, parn, dazl and cpeb1 (PubMed:21098481).</text>
</comment>
<comment type="subcellular location">
    <subcellularLocation>
        <location evidence="1">Cytoplasm</location>
    </subcellularLocation>
    <subcellularLocation>
        <location evidence="1">Cytoplasm</location>
        <location evidence="1">P-body</location>
    </subcellularLocation>
    <subcellularLocation>
        <location evidence="1">Cytoplasmic granule</location>
    </subcellularLocation>
</comment>
<comment type="alternative products">
    <event type="alternative splicing"/>
    <isoform>
        <id>Q66KI6-1</id>
        <name>1</name>
        <sequence type="displayed"/>
    </isoform>
    <isoform>
        <id>Q66KI6-2</id>
        <name>2</name>
        <sequence type="described" ref="VSP_057677"/>
    </isoform>
</comment>
<comment type="tissue specificity">
    <text evidence="6">Present in oocytes (at protein level).</text>
</comment>
<comment type="domain">
    <text evidence="1">The pumilio repeats mediate the association with RNA by packing together to form a right-handed superhelix that approximates a half donut. RNA-binding occurs on the concave side of the surface. Pum1 is composed of 8 pumilio repeats of 36 residues; each repeat binds a single nucleotide in its RNA target. Residues at positions 12 and 16 of the pumilio repeat bind each RNA base via hydrogen bonding or van der Waals contacts with the Watson-Crick edge, while the amino acid at position 13 makes a stacking interaction. The recognition of RNA by pumilio repeats is base specific: cysteine and glutamine at position 12 and 16, respectively, bind adenine; asparagine and glutamine bind uracil; and serine and glutamate bind guanine.</text>
</comment>
<comment type="PTM">
    <text evidence="7">Phosphorylated. Phosphorylation takes place at the time of dissociation of cpeb1-a from pum1 and the translational activation of ccnb1 mRNA.</text>
</comment>
<keyword id="KW-0025">Alternative splicing</keyword>
<keyword id="KW-0963">Cytoplasm</keyword>
<keyword id="KW-0597">Phosphoprotein</keyword>
<keyword id="KW-1185">Reference proteome</keyword>
<keyword id="KW-0677">Repeat</keyword>
<keyword id="KW-0694">RNA-binding</keyword>
<keyword id="KW-0810">Translation regulation</keyword>
<dbReference type="EMBL" id="AB091091">
    <property type="protein sequence ID" value="BAC57980.1"/>
    <property type="molecule type" value="mRNA"/>
</dbReference>
<dbReference type="EMBL" id="BC080379">
    <property type="protein sequence ID" value="AAH80379.1"/>
    <property type="molecule type" value="mRNA"/>
</dbReference>
<dbReference type="RefSeq" id="NP_001081119.1">
    <molecule id="Q66KI6-1"/>
    <property type="nucleotide sequence ID" value="NM_001087650.1"/>
</dbReference>
<dbReference type="SMR" id="Q66KI6"/>
<dbReference type="IntAct" id="Q66KI6">
    <property type="interactions" value="1"/>
</dbReference>
<dbReference type="DNASU" id="394392"/>
<dbReference type="GeneID" id="394392"/>
<dbReference type="KEGG" id="xla:394392"/>
<dbReference type="AGR" id="Xenbase:XB-GENE-957405"/>
<dbReference type="CTD" id="394392"/>
<dbReference type="Xenbase" id="XB-GENE-957405">
    <property type="gene designation" value="pum1.S"/>
</dbReference>
<dbReference type="OMA" id="NTRPPMR"/>
<dbReference type="OrthoDB" id="668540at2759"/>
<dbReference type="Proteomes" id="UP000186698">
    <property type="component" value="Chromosome 2S"/>
</dbReference>
<dbReference type="Bgee" id="394392">
    <property type="expression patterns" value="Expressed in brain and 19 other cell types or tissues"/>
</dbReference>
<dbReference type="GO" id="GO:0005737">
    <property type="term" value="C:cytoplasm"/>
    <property type="evidence" value="ECO:0000318"/>
    <property type="project" value="GO_Central"/>
</dbReference>
<dbReference type="GO" id="GO:0005829">
    <property type="term" value="C:cytosol"/>
    <property type="evidence" value="ECO:0000318"/>
    <property type="project" value="GO_Central"/>
</dbReference>
<dbReference type="GO" id="GO:0000932">
    <property type="term" value="C:P-body"/>
    <property type="evidence" value="ECO:0007669"/>
    <property type="project" value="UniProtKB-SubCell"/>
</dbReference>
<dbReference type="GO" id="GO:0003730">
    <property type="term" value="F:mRNA 3'-UTR binding"/>
    <property type="evidence" value="ECO:0000318"/>
    <property type="project" value="GO_Central"/>
</dbReference>
<dbReference type="GO" id="GO:0035196">
    <property type="term" value="P:miRNA processing"/>
    <property type="evidence" value="ECO:0000318"/>
    <property type="project" value="GO_Central"/>
</dbReference>
<dbReference type="GO" id="GO:0043488">
    <property type="term" value="P:regulation of mRNA stability"/>
    <property type="evidence" value="ECO:0000318"/>
    <property type="project" value="GO_Central"/>
</dbReference>
<dbReference type="GO" id="GO:0006417">
    <property type="term" value="P:regulation of translation"/>
    <property type="evidence" value="ECO:0007669"/>
    <property type="project" value="UniProtKB-KW"/>
</dbReference>
<dbReference type="CDD" id="cd07920">
    <property type="entry name" value="Pumilio"/>
    <property type="match status" value="1"/>
</dbReference>
<dbReference type="FunFam" id="1.25.10.10:FF:000004">
    <property type="entry name" value="Pumilio homolog 1 isoform 2"/>
    <property type="match status" value="1"/>
</dbReference>
<dbReference type="Gene3D" id="1.25.10.10">
    <property type="entry name" value="Leucine-rich Repeat Variant"/>
    <property type="match status" value="1"/>
</dbReference>
<dbReference type="InterPro" id="IPR011989">
    <property type="entry name" value="ARM-like"/>
</dbReference>
<dbReference type="InterPro" id="IPR016024">
    <property type="entry name" value="ARM-type_fold"/>
</dbReference>
<dbReference type="InterPro" id="IPR033133">
    <property type="entry name" value="PUM-HD"/>
</dbReference>
<dbReference type="InterPro" id="IPR033712">
    <property type="entry name" value="Pumilio_RNA-bd"/>
</dbReference>
<dbReference type="InterPro" id="IPR001313">
    <property type="entry name" value="Pumilio_RNA-bd_rpt"/>
</dbReference>
<dbReference type="PANTHER" id="PTHR12537:SF1">
    <property type="entry name" value="PUMILIO HOMOLOG 1"/>
    <property type="match status" value="1"/>
</dbReference>
<dbReference type="PANTHER" id="PTHR12537">
    <property type="entry name" value="RNA BINDING PROTEIN PUMILIO-RELATED"/>
    <property type="match status" value="1"/>
</dbReference>
<dbReference type="Pfam" id="PF00806">
    <property type="entry name" value="PUF"/>
    <property type="match status" value="8"/>
</dbReference>
<dbReference type="SMART" id="SM00025">
    <property type="entry name" value="Pumilio"/>
    <property type="match status" value="8"/>
</dbReference>
<dbReference type="SUPFAM" id="SSF48371">
    <property type="entry name" value="ARM repeat"/>
    <property type="match status" value="1"/>
</dbReference>
<dbReference type="PROSITE" id="PS50302">
    <property type="entry name" value="PUM"/>
    <property type="match status" value="8"/>
</dbReference>
<dbReference type="PROSITE" id="PS50303">
    <property type="entry name" value="PUM_HD"/>
    <property type="match status" value="1"/>
</dbReference>
<protein>
    <recommendedName>
        <fullName evidence="9">Pumilio homolog 1</fullName>
        <shortName>Pumilio-1</shortName>
        <shortName evidence="8">XPum</shortName>
    </recommendedName>
</protein>
<reference key="1">
    <citation type="journal article" date="2003" name="Mech. Dev.">
        <title>Involvement of Xenopus Pumilio in the translational regulation that is specific to cyclin B1 mRNA during oocyte maturation.</title>
        <authorList>
            <person name="Nakahata S."/>
            <person name="Kotani T."/>
            <person name="Mita K."/>
            <person name="Kawasaki T."/>
            <person name="Katsu Y."/>
            <person name="Nagahama Y."/>
            <person name="Yamashita M."/>
        </authorList>
    </citation>
    <scope>NUCLEOTIDE SEQUENCE [MRNA] (ISOFORM 2)</scope>
    <scope>FUNCTION</scope>
    <scope>RNA-BINDING</scope>
    <scope>TISSUE SPECIFICITY</scope>
    <scope>INTERACTION WITH CPEB1-A</scope>
    <source>
        <tissue evidence="11">Ovary</tissue>
    </source>
</reference>
<reference key="2">
    <citation type="submission" date="2004-08" db="EMBL/GenBank/DDBJ databases">
        <authorList>
            <consortium name="NIH - Xenopus Gene Collection (XGC) project"/>
        </authorList>
    </citation>
    <scope>NUCLEOTIDE SEQUENCE [LARGE SCALE MRNA] (ISOFORM 1)</scope>
    <source>
        <tissue evidence="10">Embryo</tissue>
    </source>
</reference>
<reference key="3">
    <citation type="journal article" date="2011" name="J. Biol. Chem.">
        <title>Biochemical characterization of Pumilio1 and Pumilio2 in Xenopus oocytes.</title>
        <authorList>
            <person name="Ota R."/>
            <person name="Kotani T."/>
            <person name="Yamashita M."/>
        </authorList>
    </citation>
    <scope>PHOSPHORYLATION</scope>
    <scope>SUBUNIT</scope>
    <scope>FUNCTION</scope>
</reference>
<name>PUM1_XENLA</name>
<accession>Q66KI6</accession>
<accession>Q800L7</accession>
<gene>
    <name evidence="12" type="primary">pum1</name>
    <name evidence="10" type="synonym">pum1-A</name>
</gene>
<proteinExistence type="evidence at protein level"/>
<sequence length="1190" mass="127485">MSVACVLKRKTVLWQDSFSPHLKQYPEGTLNHNMPVVLTSGPVGQQQPPQPPTHSALATGPHASPVGGSMGVAGRSQDDAMVDYFFQRQHGEQLGGGGSGGGGYNNSKHRWPTGDNIHAEHQVRSMDELNHDFQALALEGRAMGEQLLTGKKFWETDDSNKDGPKGIFLGDQWRESTWGASDHSVSQPIMVQRRPGQGFHVSSEVNSVLSPRSESGGLGVSMVEYVLSSSPGDSCLRKGAFGPRDTEGDENEKVDKKNKGVYEGDKLGDLKEEADSMDKCNGLPVQNGIDGDVKDFSRTPGNCQASASEVDLLGSIQNGSEGLVQLTNNNGAKPVEDFGGIESQSVQLDPMEHVGMEPLQFDYQGNQVPVDSGAAAVGLFDYNSQQQLFQRPNALTVQQLTAAQQQQYALAAAHQQHIGMFSAGLAPAAFVPNPYIISAAPPGTDPYAAGLAAAATLGPAVVPHQYYGVTPWGVYPANLFQQQAAAAAAASNSASQQNNPQSQQGQQQVLRAGGNQRPLTPNQNQQGQQTDQLVAAAAVNSALAFGQGLAAGMPGYPMLAPAAYYDQTGALVVNTGARNGLGGPVRLVAPASVIISQSAAQAAVAAAAASANGPAGTANGPFRQLNSQQPQGQPQPQGNQNLASSSFYGNSSMNSNSQSSSLFSQSSGQPGNSSLGFGSSGSLGATLSSALGGFGTAVANSNTNSGSRRDSLTGSSDIYKRTSSSLTPIGHSFYNGLGFSSSPGPVGMPLPSQGPSHSQTPPPSLSSHGSSTSLNLGGLTNGSGRYISAAPGAEAKYRSASSASSLFSPSSTLFPSSRLRYGMSDVMPSGRSRLLEDFRNNRYPNLQLREIAGHIMEFSQDQHGSRFIQLKLERATPAERQLVFNEILQAAYQLMVDVFGNYVIQKFFEFGSLEQKLALAERIRGHVLSLALQMYGCRVIQKALEFIPPDQQVINEMVRELDGHVLKCVKDQNGNHVVQKCIECVQPQSLQFIIDAFKSQVFALSTHPYGCRVIQRILEHCLPEQTLPILEELHQHTEQLVQDQYGNYVIQHVLEHGRPEDKSKIVAEIRGNVLVLSQHKFASNVVEKCVTHASRTERAMLIDEVCTMNDGPHSALYTMMKDQYANYVVQKMIDVAEPAQRKIVMHKIRPHIATLRKYTYGKHILAKLEKYYMKNGMDLGPMCGPSNGII</sequence>